<proteinExistence type="evidence at transcript level"/>
<gene>
    <name type="primary">Uspl1</name>
</gene>
<comment type="function">
    <text evidence="2">SUMO-specific isopeptidase involved in protein desumoylation. Specifically binds SUMO proteins with a higher affinity for SUMO2 and SUMO3 which it cleaves more efficiently. Also able to process full-length SUMO proteins to their mature forms (By similarity). Plays a key role in RNA polymerase-II-mediated snRNA transcription in the Cajal bodies (By similarity). Is a component of complexes that can bind to U snRNA genes (By similarity).</text>
</comment>
<comment type="subunit">
    <text evidence="2">Interacts with ELL.</text>
</comment>
<comment type="subcellular location">
    <subcellularLocation>
        <location evidence="1">Nucleus</location>
        <location evidence="1">Cajal body</location>
    </subcellularLocation>
</comment>
<comment type="alternative products">
    <event type="alternative splicing"/>
    <isoform>
        <id>Q3ULM6-1</id>
        <name>1</name>
        <sequence type="displayed"/>
    </isoform>
    <isoform>
        <id>Q3ULM6-2</id>
        <name>2</name>
        <sequence type="described" ref="VSP_023480"/>
    </isoform>
    <isoform>
        <id>Q3ULM6-3</id>
        <name>3</name>
        <sequence type="described" ref="VSP_023480 VSP_023481 VSP_023482"/>
    </isoform>
    <isoform>
        <id>Q3ULM6-4</id>
        <name>4</name>
        <sequence type="described" ref="VSP_023481 VSP_023482"/>
    </isoform>
</comment>
<comment type="similarity">
    <text evidence="6">Belongs to the peptidase C19 family.</text>
</comment>
<comment type="caution">
    <text evidence="6">Probably inactive as a hydrolase due to lack of catalytic Cys and His.</text>
</comment>
<dbReference type="EC" id="3.4.22.-"/>
<dbReference type="EMBL" id="AK050969">
    <property type="protein sequence ID" value="BAC34481.2"/>
    <property type="molecule type" value="mRNA"/>
</dbReference>
<dbReference type="EMBL" id="AK088787">
    <property type="protein sequence ID" value="BAE43395.1"/>
    <property type="molecule type" value="mRNA"/>
</dbReference>
<dbReference type="EMBL" id="AK145409">
    <property type="protein sequence ID" value="BAE26422.1"/>
    <property type="molecule type" value="mRNA"/>
</dbReference>
<dbReference type="EMBL" id="AK161654">
    <property type="protein sequence ID" value="BAE36513.1"/>
    <property type="molecule type" value="mRNA"/>
</dbReference>
<dbReference type="EMBL" id="BC028849">
    <property type="protein sequence ID" value="AAH28849.1"/>
    <property type="molecule type" value="mRNA"/>
</dbReference>
<dbReference type="EMBL" id="BC086664">
    <property type="protein sequence ID" value="AAH86664.1"/>
    <property type="molecule type" value="mRNA"/>
</dbReference>
<dbReference type="CCDS" id="CCDS39406.1">
    <molecule id="Q3ULM6-4"/>
</dbReference>
<dbReference type="CCDS" id="CCDS51704.1">
    <molecule id="Q3ULM6-1"/>
</dbReference>
<dbReference type="CCDS" id="CCDS51705.1">
    <molecule id="Q3ULM6-3"/>
</dbReference>
<dbReference type="CCDS" id="CCDS51706.1">
    <molecule id="Q3ULM6-2"/>
</dbReference>
<dbReference type="RefSeq" id="NP_001013396.2">
    <molecule id="Q3ULM6-4"/>
    <property type="nucleotide sequence ID" value="NM_001013378.2"/>
</dbReference>
<dbReference type="RefSeq" id="NP_001108621.1">
    <property type="nucleotide sequence ID" value="NM_001115149.1"/>
</dbReference>
<dbReference type="RefSeq" id="NP_001108622.1">
    <property type="nucleotide sequence ID" value="NM_001115150.1"/>
</dbReference>
<dbReference type="RefSeq" id="NP_001108623.1">
    <molecule id="Q3ULM6-3"/>
    <property type="nucleotide sequence ID" value="NM_001115151.1"/>
</dbReference>
<dbReference type="RefSeq" id="NP_001108625.1">
    <property type="nucleotide sequence ID" value="NM_001115153.1"/>
</dbReference>
<dbReference type="RefSeq" id="NP_001273753.1">
    <property type="nucleotide sequence ID" value="NM_001286824.1"/>
</dbReference>
<dbReference type="RefSeq" id="NP_001273754.1">
    <property type="nucleotide sequence ID" value="NM_001286825.1"/>
</dbReference>
<dbReference type="RefSeq" id="NP_001346886.1">
    <molecule id="Q3ULM6-4"/>
    <property type="nucleotide sequence ID" value="NM_001359957.1"/>
</dbReference>
<dbReference type="RefSeq" id="XP_017176366.1">
    <property type="nucleotide sequence ID" value="XM_017320877.1"/>
</dbReference>
<dbReference type="SMR" id="Q3ULM6"/>
<dbReference type="BioGRID" id="231197">
    <property type="interactions" value="1"/>
</dbReference>
<dbReference type="FunCoup" id="Q3ULM6">
    <property type="interactions" value="2629"/>
</dbReference>
<dbReference type="STRING" id="10090.ENSMUSP00000113247"/>
<dbReference type="MEROPS" id="C98.001"/>
<dbReference type="GlyGen" id="Q3ULM6">
    <property type="glycosylation" value="1 site"/>
</dbReference>
<dbReference type="PhosphoSitePlus" id="Q3ULM6"/>
<dbReference type="PaxDb" id="10090-ENSMUSP00000113247"/>
<dbReference type="ProteomicsDB" id="299658">
    <molecule id="Q3ULM6-1"/>
</dbReference>
<dbReference type="ProteomicsDB" id="299659">
    <molecule id="Q3ULM6-2"/>
</dbReference>
<dbReference type="ProteomicsDB" id="299661">
    <molecule id="Q3ULM6-4"/>
</dbReference>
<dbReference type="Antibodypedia" id="22766">
    <property type="antibodies" value="23 antibodies from 10 providers"/>
</dbReference>
<dbReference type="Ensembl" id="ENSMUST00000100410.10">
    <molecule id="Q3ULM6-4"/>
    <property type="protein sequence ID" value="ENSMUSP00000097978.4"/>
    <property type="gene ID" value="ENSMUSG00000041264.17"/>
</dbReference>
<dbReference type="Ensembl" id="ENSMUST00000117878.8">
    <molecule id="Q3ULM6-3"/>
    <property type="protein sequence ID" value="ENSMUSP00000113176.2"/>
    <property type="gene ID" value="ENSMUSG00000041264.17"/>
</dbReference>
<dbReference type="GeneID" id="231915"/>
<dbReference type="KEGG" id="mmu:231915"/>
<dbReference type="UCSC" id="uc009apl.2">
    <molecule id="Q3ULM6-4"/>
    <property type="organism name" value="mouse"/>
</dbReference>
<dbReference type="UCSC" id="uc009apm.2">
    <molecule id="Q3ULM6-3"/>
    <property type="organism name" value="mouse"/>
</dbReference>
<dbReference type="AGR" id="MGI:2442342"/>
<dbReference type="CTD" id="10208"/>
<dbReference type="MGI" id="MGI:2442342">
    <property type="gene designation" value="Uspl1"/>
</dbReference>
<dbReference type="VEuPathDB" id="HostDB:ENSMUSG00000041264"/>
<dbReference type="eggNOG" id="ENOG502QRFM">
    <property type="taxonomic scope" value="Eukaryota"/>
</dbReference>
<dbReference type="GeneTree" id="ENSGT00390000002316"/>
<dbReference type="HOGENOM" id="CLU_526705_0_0_1"/>
<dbReference type="InParanoid" id="Q3ULM6"/>
<dbReference type="OrthoDB" id="6160353at2759"/>
<dbReference type="PhylomeDB" id="Q3ULM6"/>
<dbReference type="BioGRID-ORCS" id="231915">
    <property type="hits" value="22 hits in 79 CRISPR screens"/>
</dbReference>
<dbReference type="ChiTaRS" id="Uspl1">
    <property type="organism name" value="mouse"/>
</dbReference>
<dbReference type="PRO" id="PR:Q3ULM6"/>
<dbReference type="Proteomes" id="UP000000589">
    <property type="component" value="Chromosome 5"/>
</dbReference>
<dbReference type="RNAct" id="Q3ULM6">
    <property type="molecule type" value="protein"/>
</dbReference>
<dbReference type="Bgee" id="ENSMUSG00000041264">
    <property type="expression patterns" value="Expressed in manus and 225 other cell types or tissues"/>
</dbReference>
<dbReference type="ExpressionAtlas" id="Q3ULM6">
    <property type="expression patterns" value="baseline and differential"/>
</dbReference>
<dbReference type="GO" id="GO:0015030">
    <property type="term" value="C:Cajal body"/>
    <property type="evidence" value="ECO:0000250"/>
    <property type="project" value="UniProtKB"/>
</dbReference>
<dbReference type="GO" id="GO:0016929">
    <property type="term" value="F:deSUMOylase activity"/>
    <property type="evidence" value="ECO:0000250"/>
    <property type="project" value="UniProtKB"/>
</dbReference>
<dbReference type="GO" id="GO:0032183">
    <property type="term" value="F:SUMO binding"/>
    <property type="evidence" value="ECO:0000250"/>
    <property type="project" value="UniProtKB"/>
</dbReference>
<dbReference type="GO" id="GO:0001825">
    <property type="term" value="P:blastocyst formation"/>
    <property type="evidence" value="ECO:0000315"/>
    <property type="project" value="MGI"/>
</dbReference>
<dbReference type="GO" id="GO:0030576">
    <property type="term" value="P:Cajal body organization"/>
    <property type="evidence" value="ECO:0000250"/>
    <property type="project" value="UniProtKB"/>
</dbReference>
<dbReference type="GO" id="GO:0008283">
    <property type="term" value="P:cell population proliferation"/>
    <property type="evidence" value="ECO:0000250"/>
    <property type="project" value="UniProtKB"/>
</dbReference>
<dbReference type="GO" id="GO:0016926">
    <property type="term" value="P:protein desumoylation"/>
    <property type="evidence" value="ECO:0000250"/>
    <property type="project" value="UniProtKB"/>
</dbReference>
<dbReference type="GO" id="GO:0006508">
    <property type="term" value="P:proteolysis"/>
    <property type="evidence" value="ECO:0007669"/>
    <property type="project" value="UniProtKB-KW"/>
</dbReference>
<dbReference type="FunFam" id="3.90.70.10:FF:000270">
    <property type="entry name" value="SUMO-specific isopeptidase USPL1"/>
    <property type="match status" value="1"/>
</dbReference>
<dbReference type="Gene3D" id="3.90.70.10">
    <property type="entry name" value="Cysteine proteinases"/>
    <property type="match status" value="1"/>
</dbReference>
<dbReference type="InterPro" id="IPR029388">
    <property type="entry name" value="DUF4650"/>
</dbReference>
<dbReference type="InterPro" id="IPR038765">
    <property type="entry name" value="Papain-like_cys_pep_sf"/>
</dbReference>
<dbReference type="InterPro" id="IPR028890">
    <property type="entry name" value="Peptidase_C98"/>
</dbReference>
<dbReference type="InterPro" id="IPR028889">
    <property type="entry name" value="USP_dom"/>
</dbReference>
<dbReference type="InterPro" id="IPR033505">
    <property type="entry name" value="USPL1"/>
</dbReference>
<dbReference type="PANTHER" id="PTHR15294">
    <property type="entry name" value="RETINOVIN-RELATED"/>
    <property type="match status" value="1"/>
</dbReference>
<dbReference type="PANTHER" id="PTHR15294:SF3">
    <property type="entry name" value="SUMO-SPECIFIC ISOPEPTIDASE USPL1"/>
    <property type="match status" value="1"/>
</dbReference>
<dbReference type="Pfam" id="PF15509">
    <property type="entry name" value="DUF4650"/>
    <property type="match status" value="1"/>
</dbReference>
<dbReference type="Pfam" id="PF15499">
    <property type="entry name" value="Peptidase_C98"/>
    <property type="match status" value="1"/>
</dbReference>
<dbReference type="SUPFAM" id="SSF54001">
    <property type="entry name" value="Cysteine proteinases"/>
    <property type="match status" value="1"/>
</dbReference>
<dbReference type="PROSITE" id="PS50235">
    <property type="entry name" value="USP_3"/>
    <property type="match status" value="1"/>
</dbReference>
<keyword id="KW-0025">Alternative splicing</keyword>
<keyword id="KW-0378">Hydrolase</keyword>
<keyword id="KW-0539">Nucleus</keyword>
<keyword id="KW-0597">Phosphoprotein</keyword>
<keyword id="KW-0645">Protease</keyword>
<keyword id="KW-1185">Reference proteome</keyword>
<keyword id="KW-0788">Thiol protease</keyword>
<sequence length="1089" mass="118390">MTDDSLKIGNGLPLVGPGTDVGISSLPMLGYLGKNYASAKVTTDGHCPACRAKGKLSALKPYRISFQESVFLCEDLQCIYPLGSESLTNLISPDSEDCPTPSKPQKRKRLETNCRNSPLPVHSKKTRSHIVTDSEPIVNGKYNGEVCDDFSASFPDTSAHQDPASTAASVEQSEALEADDVVVAATEDPATVSVTSELEMPAKSRCLPLCQTLCVQWKNTQALCWLDCILSALVHLEVLRKTVLEACSREECVFGRLFEMYHQADELLHTHHLHGVTGEDCKKLTSEIFTEIDTCLNKVRDEIFAKLQPKLRCTLGDMESPVFALPVLLKLEPHVESLFTYSFSWNFECSHCGHQYQNRCVKSLVTFTNIVPEWHPLNAAHFGPCNSCNSKSQIRKMVLERASPILMLHFVEGLPRRDLQHYAFHFEGSLYQVTSVIQYQANNHFITWFLDADGSWLECDDLKGPCAKRHVTCEVPASETHIVIWERKSQVPIEEAACLPCMKPNVQPVSGEEQPTCPALCSLAGTATSEPSVAHPTSMAGAPQTLPEIQAVAHGDSVLSGAKGMVDSILPSALEETIQETASVSQVDSKDCLLEDKPVAGSAALVRVLAFQPQDSPGSSGSSLVSSLCEGKLVAPCVDSSFPSQAVSTDLQAVLSQAGDTVVPNPVTDAPVPVLVQELKSLATEKDSQTQLLPLKTEKLDPEQPGKSQASNLRKRETTASSKTVAARSAQNQPRKEDQKRAFVGSWVKGLLSRGGAFMPTCVLSQSRAVSDLQPSVKGASNFDGFKTKSISRRSKRMSRKAKHMEELSPRNSSPPLSWTAALTQAAENATSALLREQEGSRPAPLRHRSPGNESAISPASRGDAAEDQVHKLRLKLLKKLKAKKKKLAALISSPHREPSLSDHSEPASHCGTPASDQSEPVSHCGSPNDCESIEDLLKELQHQIDLADSKSGCTSAPDATSNNSQSHEEILAELLSPTAMSEPSESGELELRYLEMGDSTPAQAPSEFSVVSLNTCLKQDHDYCSPEKGQREVDLHSVMDSACIRTLNLGSPMKTDIFDDFFSTSALNSLTNDTLDIPHFDDSLFENC</sequence>
<organism>
    <name type="scientific">Mus musculus</name>
    <name type="common">Mouse</name>
    <dbReference type="NCBI Taxonomy" id="10090"/>
    <lineage>
        <taxon>Eukaryota</taxon>
        <taxon>Metazoa</taxon>
        <taxon>Chordata</taxon>
        <taxon>Craniata</taxon>
        <taxon>Vertebrata</taxon>
        <taxon>Euteleostomi</taxon>
        <taxon>Mammalia</taxon>
        <taxon>Eutheria</taxon>
        <taxon>Euarchontoglires</taxon>
        <taxon>Glires</taxon>
        <taxon>Rodentia</taxon>
        <taxon>Myomorpha</taxon>
        <taxon>Muroidea</taxon>
        <taxon>Muridae</taxon>
        <taxon>Murinae</taxon>
        <taxon>Mus</taxon>
        <taxon>Mus</taxon>
    </lineage>
</organism>
<accession>Q3ULM6</accession>
<accession>Q0P689</accession>
<accession>Q3TT12</accession>
<accession>Q3V2W0</accession>
<accession>Q5RJG8</accession>
<accession>Q8BHR4</accession>
<reference key="1">
    <citation type="journal article" date="2005" name="Science">
        <title>The transcriptional landscape of the mammalian genome.</title>
        <authorList>
            <person name="Carninci P."/>
            <person name="Kasukawa T."/>
            <person name="Katayama S."/>
            <person name="Gough J."/>
            <person name="Frith M.C."/>
            <person name="Maeda N."/>
            <person name="Oyama R."/>
            <person name="Ravasi T."/>
            <person name="Lenhard B."/>
            <person name="Wells C."/>
            <person name="Kodzius R."/>
            <person name="Shimokawa K."/>
            <person name="Bajic V.B."/>
            <person name="Brenner S.E."/>
            <person name="Batalov S."/>
            <person name="Forrest A.R."/>
            <person name="Zavolan M."/>
            <person name="Davis M.J."/>
            <person name="Wilming L.G."/>
            <person name="Aidinis V."/>
            <person name="Allen J.E."/>
            <person name="Ambesi-Impiombato A."/>
            <person name="Apweiler R."/>
            <person name="Aturaliya R.N."/>
            <person name="Bailey T.L."/>
            <person name="Bansal M."/>
            <person name="Baxter L."/>
            <person name="Beisel K.W."/>
            <person name="Bersano T."/>
            <person name="Bono H."/>
            <person name="Chalk A.M."/>
            <person name="Chiu K.P."/>
            <person name="Choudhary V."/>
            <person name="Christoffels A."/>
            <person name="Clutterbuck D.R."/>
            <person name="Crowe M.L."/>
            <person name="Dalla E."/>
            <person name="Dalrymple B.P."/>
            <person name="de Bono B."/>
            <person name="Della Gatta G."/>
            <person name="di Bernardo D."/>
            <person name="Down T."/>
            <person name="Engstrom P."/>
            <person name="Fagiolini M."/>
            <person name="Faulkner G."/>
            <person name="Fletcher C.F."/>
            <person name="Fukushima T."/>
            <person name="Furuno M."/>
            <person name="Futaki S."/>
            <person name="Gariboldi M."/>
            <person name="Georgii-Hemming P."/>
            <person name="Gingeras T.R."/>
            <person name="Gojobori T."/>
            <person name="Green R.E."/>
            <person name="Gustincich S."/>
            <person name="Harbers M."/>
            <person name="Hayashi Y."/>
            <person name="Hensch T.K."/>
            <person name="Hirokawa N."/>
            <person name="Hill D."/>
            <person name="Huminiecki L."/>
            <person name="Iacono M."/>
            <person name="Ikeo K."/>
            <person name="Iwama A."/>
            <person name="Ishikawa T."/>
            <person name="Jakt M."/>
            <person name="Kanapin A."/>
            <person name="Katoh M."/>
            <person name="Kawasawa Y."/>
            <person name="Kelso J."/>
            <person name="Kitamura H."/>
            <person name="Kitano H."/>
            <person name="Kollias G."/>
            <person name="Krishnan S.P."/>
            <person name="Kruger A."/>
            <person name="Kummerfeld S.K."/>
            <person name="Kurochkin I.V."/>
            <person name="Lareau L.F."/>
            <person name="Lazarevic D."/>
            <person name="Lipovich L."/>
            <person name="Liu J."/>
            <person name="Liuni S."/>
            <person name="McWilliam S."/>
            <person name="Madan Babu M."/>
            <person name="Madera M."/>
            <person name="Marchionni L."/>
            <person name="Matsuda H."/>
            <person name="Matsuzawa S."/>
            <person name="Miki H."/>
            <person name="Mignone F."/>
            <person name="Miyake S."/>
            <person name="Morris K."/>
            <person name="Mottagui-Tabar S."/>
            <person name="Mulder N."/>
            <person name="Nakano N."/>
            <person name="Nakauchi H."/>
            <person name="Ng P."/>
            <person name="Nilsson R."/>
            <person name="Nishiguchi S."/>
            <person name="Nishikawa S."/>
            <person name="Nori F."/>
            <person name="Ohara O."/>
            <person name="Okazaki Y."/>
            <person name="Orlando V."/>
            <person name="Pang K.C."/>
            <person name="Pavan W.J."/>
            <person name="Pavesi G."/>
            <person name="Pesole G."/>
            <person name="Petrovsky N."/>
            <person name="Piazza S."/>
            <person name="Reed J."/>
            <person name="Reid J.F."/>
            <person name="Ring B.Z."/>
            <person name="Ringwald M."/>
            <person name="Rost B."/>
            <person name="Ruan Y."/>
            <person name="Salzberg S.L."/>
            <person name="Sandelin A."/>
            <person name="Schneider C."/>
            <person name="Schoenbach C."/>
            <person name="Sekiguchi K."/>
            <person name="Semple C.A."/>
            <person name="Seno S."/>
            <person name="Sessa L."/>
            <person name="Sheng Y."/>
            <person name="Shibata Y."/>
            <person name="Shimada H."/>
            <person name="Shimada K."/>
            <person name="Silva D."/>
            <person name="Sinclair B."/>
            <person name="Sperling S."/>
            <person name="Stupka E."/>
            <person name="Sugiura K."/>
            <person name="Sultana R."/>
            <person name="Takenaka Y."/>
            <person name="Taki K."/>
            <person name="Tammoja K."/>
            <person name="Tan S.L."/>
            <person name="Tang S."/>
            <person name="Taylor M.S."/>
            <person name="Tegner J."/>
            <person name="Teichmann S.A."/>
            <person name="Ueda H.R."/>
            <person name="van Nimwegen E."/>
            <person name="Verardo R."/>
            <person name="Wei C.L."/>
            <person name="Yagi K."/>
            <person name="Yamanishi H."/>
            <person name="Zabarovsky E."/>
            <person name="Zhu S."/>
            <person name="Zimmer A."/>
            <person name="Hide W."/>
            <person name="Bult C."/>
            <person name="Grimmond S.M."/>
            <person name="Teasdale R.D."/>
            <person name="Liu E.T."/>
            <person name="Brusic V."/>
            <person name="Quackenbush J."/>
            <person name="Wahlestedt C."/>
            <person name="Mattick J.S."/>
            <person name="Hume D.A."/>
            <person name="Kai C."/>
            <person name="Sasaki D."/>
            <person name="Tomaru Y."/>
            <person name="Fukuda S."/>
            <person name="Kanamori-Katayama M."/>
            <person name="Suzuki M."/>
            <person name="Aoki J."/>
            <person name="Arakawa T."/>
            <person name="Iida J."/>
            <person name="Imamura K."/>
            <person name="Itoh M."/>
            <person name="Kato T."/>
            <person name="Kawaji H."/>
            <person name="Kawagashira N."/>
            <person name="Kawashima T."/>
            <person name="Kojima M."/>
            <person name="Kondo S."/>
            <person name="Konno H."/>
            <person name="Nakano K."/>
            <person name="Ninomiya N."/>
            <person name="Nishio T."/>
            <person name="Okada M."/>
            <person name="Plessy C."/>
            <person name="Shibata K."/>
            <person name="Shiraki T."/>
            <person name="Suzuki S."/>
            <person name="Tagami M."/>
            <person name="Waki K."/>
            <person name="Watahiki A."/>
            <person name="Okamura-Oho Y."/>
            <person name="Suzuki H."/>
            <person name="Kawai J."/>
            <person name="Hayashizaki Y."/>
        </authorList>
    </citation>
    <scope>NUCLEOTIDE SEQUENCE [LARGE SCALE MRNA] (ISOFORMS 1; 2 AND 3)</scope>
    <source>
        <strain>C57BL/6J</strain>
        <strain>NOD</strain>
        <tissue>Embryo</tissue>
        <tissue>Thymus</tissue>
    </source>
</reference>
<reference key="2">
    <citation type="journal article" date="2004" name="Genome Res.">
        <title>The status, quality, and expansion of the NIH full-length cDNA project: the Mammalian Gene Collection (MGC).</title>
        <authorList>
            <consortium name="The MGC Project Team"/>
        </authorList>
    </citation>
    <scope>NUCLEOTIDE SEQUENCE [LARGE SCALE MRNA] (ISOFORM 4)</scope>
    <source>
        <strain>C57BL/6J</strain>
        <strain>Czech II</strain>
        <tissue>Eye</tissue>
        <tissue>Mammary tumor</tissue>
    </source>
</reference>
<evidence type="ECO:0000250" key="1"/>
<evidence type="ECO:0000250" key="2">
    <source>
        <dbReference type="UniProtKB" id="Q5W0Q7"/>
    </source>
</evidence>
<evidence type="ECO:0000256" key="3">
    <source>
        <dbReference type="SAM" id="MobiDB-lite"/>
    </source>
</evidence>
<evidence type="ECO:0000303" key="4">
    <source>
    </source>
</evidence>
<evidence type="ECO:0000303" key="5">
    <source>
    </source>
</evidence>
<evidence type="ECO:0000305" key="6"/>
<name>USPL1_MOUSE</name>
<protein>
    <recommendedName>
        <fullName>SUMO-specific isopeptidase USPL1</fullName>
        <ecNumber>3.4.22.-</ecNumber>
    </recommendedName>
    <alternativeName>
        <fullName>Ubiquitin-specific peptidase-like protein 1</fullName>
    </alternativeName>
</protein>
<feature type="chain" id="PRO_0000279527" description="SUMO-specific isopeptidase USPL1">
    <location>
        <begin position="1"/>
        <end position="1089"/>
    </location>
</feature>
<feature type="domain" description="USP">
    <location>
        <begin position="215"/>
        <end position="488"/>
    </location>
</feature>
<feature type="region of interest" description="Disordered" evidence="3">
    <location>
        <begin position="90"/>
        <end position="128"/>
    </location>
</feature>
<feature type="region of interest" description="SUMO-binding" evidence="1">
    <location>
        <begin position="224"/>
        <end position="483"/>
    </location>
</feature>
<feature type="region of interest" description="Disordered" evidence="3">
    <location>
        <begin position="687"/>
        <end position="739"/>
    </location>
</feature>
<feature type="region of interest" description="Disordered" evidence="3">
    <location>
        <begin position="791"/>
        <end position="817"/>
    </location>
</feature>
<feature type="region of interest" description="Disordered" evidence="3">
    <location>
        <begin position="835"/>
        <end position="868"/>
    </location>
</feature>
<feature type="region of interest" description="Disordered" evidence="3">
    <location>
        <begin position="891"/>
        <end position="928"/>
    </location>
</feature>
<feature type="compositionally biased region" description="Polar residues" evidence="3">
    <location>
        <begin position="719"/>
        <end position="733"/>
    </location>
</feature>
<feature type="compositionally biased region" description="Basic residues" evidence="3">
    <location>
        <begin position="791"/>
        <end position="803"/>
    </location>
</feature>
<feature type="compositionally biased region" description="Basic and acidic residues" evidence="3">
    <location>
        <begin position="895"/>
        <end position="907"/>
    </location>
</feature>
<feature type="active site" description="Nucleophile" evidence="1">
    <location>
        <position position="224"/>
    </location>
</feature>
<feature type="active site" description="Proton acceptor" evidence="1">
    <location>
        <position position="444"/>
    </location>
</feature>
<feature type="modified residue" description="Phosphoserine" evidence="2">
    <location>
        <position position="894"/>
    </location>
</feature>
<feature type="splice variant" id="VSP_023480" description="In isoform 2 and isoform 3." evidence="5">
    <location>
        <begin position="1"/>
        <end position="199"/>
    </location>
</feature>
<feature type="splice variant" id="VSP_023481" description="In isoform 3 and isoform 4." evidence="4 5">
    <original>EEQPTC</original>
    <variation>IEVPGN</variation>
    <location>
        <begin position="512"/>
        <end position="517"/>
    </location>
</feature>
<feature type="splice variant" id="VSP_023482" description="In isoform 3 and isoform 4." evidence="4 5">
    <location>
        <begin position="518"/>
        <end position="1089"/>
    </location>
</feature>
<feature type="sequence conflict" description="In Ref. 2; AAH86664." evidence="6" ref="2">
    <original>C</original>
    <variation>S</variation>
    <location>
        <position position="47"/>
    </location>
</feature>
<feature type="sequence conflict" description="In Ref. 2; AAH28849." evidence="6" ref="2">
    <original>A</original>
    <variation>V</variation>
    <location>
        <position position="58"/>
    </location>
</feature>
<feature type="sequence conflict" description="In Ref. 1; BAE26422." evidence="6" ref="1">
    <original>Q</original>
    <variation>R</variation>
    <location>
        <position position="67"/>
    </location>
</feature>
<feature type="sequence conflict" description="In Ref. 2; AAH28849." evidence="6" ref="2">
    <original>L</original>
    <variation>P</variation>
    <location>
        <position position="119"/>
    </location>
</feature>
<feature type="sequence conflict" description="In Ref. 2; AAH28849." evidence="6" ref="2">
    <original>D</original>
    <variation>G</variation>
    <location>
        <position position="148"/>
    </location>
</feature>
<feature type="sequence conflict" description="In Ref. 2; AAH28849." evidence="6" ref="2">
    <original>D</original>
    <variation>A</variation>
    <location>
        <position position="156"/>
    </location>
</feature>
<feature type="sequence conflict" description="In Ref. 2; AAH28849." evidence="6" ref="2">
    <original>A</original>
    <variation>V</variation>
    <location>
        <position position="164"/>
    </location>
</feature>
<feature type="sequence conflict" description="In Ref. 2; AAH28849." evidence="6" ref="2">
    <original>I</original>
    <variation>V</variation>
    <location>
        <position position="370"/>
    </location>
</feature>
<feature type="sequence conflict" description="In Ref. 2; AAH28849." evidence="6" ref="2">
    <original>A</original>
    <variation>V</variation>
    <location>
        <position position="497"/>
    </location>
</feature>
<feature type="sequence conflict" description="In Ref. 1; BAE43395." evidence="6" ref="1">
    <original>L</original>
    <variation>Q</variation>
    <location>
        <position position="1014"/>
    </location>
</feature>
<feature type="sequence conflict" description="In Ref. 2; AAH28849." evidence="6" ref="2">
    <original>V</original>
    <variation>A</variation>
    <location sequence="Q3ULM6-4">
        <position position="514"/>
    </location>
</feature>